<name>IF12_BORPE</name>
<sequence length="72" mass="8264">MSKDDVIQMQGEVLENLPNATFRVKLENGHVVLGHISGKMRMHYIRILPGDKVTVELTPYDLTRARIVFRSK</sequence>
<gene>
    <name evidence="1" type="primary">infA2</name>
    <name type="ordered locus">BP3637</name>
</gene>
<protein>
    <recommendedName>
        <fullName evidence="1">Translation initiation factor IF-1 2</fullName>
    </recommendedName>
</protein>
<reference key="1">
    <citation type="journal article" date="2003" name="Nat. Genet.">
        <title>Comparative analysis of the genome sequences of Bordetella pertussis, Bordetella parapertussis and Bordetella bronchiseptica.</title>
        <authorList>
            <person name="Parkhill J."/>
            <person name="Sebaihia M."/>
            <person name="Preston A."/>
            <person name="Murphy L.D."/>
            <person name="Thomson N.R."/>
            <person name="Harris D.E."/>
            <person name="Holden M.T.G."/>
            <person name="Churcher C.M."/>
            <person name="Bentley S.D."/>
            <person name="Mungall K.L."/>
            <person name="Cerdeno-Tarraga A.-M."/>
            <person name="Temple L."/>
            <person name="James K.D."/>
            <person name="Harris B."/>
            <person name="Quail M.A."/>
            <person name="Achtman M."/>
            <person name="Atkin R."/>
            <person name="Baker S."/>
            <person name="Basham D."/>
            <person name="Bason N."/>
            <person name="Cherevach I."/>
            <person name="Chillingworth T."/>
            <person name="Collins M."/>
            <person name="Cronin A."/>
            <person name="Davis P."/>
            <person name="Doggett J."/>
            <person name="Feltwell T."/>
            <person name="Goble A."/>
            <person name="Hamlin N."/>
            <person name="Hauser H."/>
            <person name="Holroyd S."/>
            <person name="Jagels K."/>
            <person name="Leather S."/>
            <person name="Moule S."/>
            <person name="Norberczak H."/>
            <person name="O'Neil S."/>
            <person name="Ormond D."/>
            <person name="Price C."/>
            <person name="Rabbinowitsch E."/>
            <person name="Rutter S."/>
            <person name="Sanders M."/>
            <person name="Saunders D."/>
            <person name="Seeger K."/>
            <person name="Sharp S."/>
            <person name="Simmonds M."/>
            <person name="Skelton J."/>
            <person name="Squares R."/>
            <person name="Squares S."/>
            <person name="Stevens K."/>
            <person name="Unwin L."/>
            <person name="Whitehead S."/>
            <person name="Barrell B.G."/>
            <person name="Maskell D.J."/>
        </authorList>
    </citation>
    <scope>NUCLEOTIDE SEQUENCE [LARGE SCALE GENOMIC DNA]</scope>
    <source>
        <strain>Tohama I / ATCC BAA-589 / NCTC 13251</strain>
    </source>
</reference>
<organism>
    <name type="scientific">Bordetella pertussis (strain Tohama I / ATCC BAA-589 / NCTC 13251)</name>
    <dbReference type="NCBI Taxonomy" id="257313"/>
    <lineage>
        <taxon>Bacteria</taxon>
        <taxon>Pseudomonadati</taxon>
        <taxon>Pseudomonadota</taxon>
        <taxon>Betaproteobacteria</taxon>
        <taxon>Burkholderiales</taxon>
        <taxon>Alcaligenaceae</taxon>
        <taxon>Bordetella</taxon>
    </lineage>
</organism>
<keyword id="KW-0963">Cytoplasm</keyword>
<keyword id="KW-0396">Initiation factor</keyword>
<keyword id="KW-0648">Protein biosynthesis</keyword>
<keyword id="KW-1185">Reference proteome</keyword>
<keyword id="KW-0694">RNA-binding</keyword>
<keyword id="KW-0699">rRNA-binding</keyword>
<comment type="function">
    <text evidence="1">One of the essential components for the initiation of protein synthesis. Stabilizes the binding of IF-2 and IF-3 on the 30S subunit to which N-formylmethionyl-tRNA(fMet) subsequently binds. Helps modulate mRNA selection, yielding the 30S pre-initiation complex (PIC). Upon addition of the 50S ribosomal subunit IF-1, IF-2 and IF-3 are released leaving the mature 70S translation initiation complex.</text>
</comment>
<comment type="subunit">
    <text evidence="1">Component of the 30S ribosomal translation pre-initiation complex which assembles on the 30S ribosome in the order IF-2 and IF-3, IF-1 and N-formylmethionyl-tRNA(fMet); mRNA recruitment can occur at any time during PIC assembly.</text>
</comment>
<comment type="subcellular location">
    <subcellularLocation>
        <location evidence="1">Cytoplasm</location>
    </subcellularLocation>
</comment>
<comment type="similarity">
    <text evidence="1">Belongs to the IF-1 family.</text>
</comment>
<dbReference type="EMBL" id="BX640422">
    <property type="protein sequence ID" value="CAE43894.1"/>
    <property type="molecule type" value="Genomic_DNA"/>
</dbReference>
<dbReference type="RefSeq" id="NP_882146.1">
    <property type="nucleotide sequence ID" value="NC_002929.2"/>
</dbReference>
<dbReference type="SMR" id="Q7VTB0"/>
<dbReference type="STRING" id="257313.BP3637"/>
<dbReference type="PaxDb" id="257313-BP3637"/>
<dbReference type="KEGG" id="bpe:BP3637"/>
<dbReference type="PATRIC" id="fig|257313.5.peg.3934"/>
<dbReference type="eggNOG" id="COG0361">
    <property type="taxonomic scope" value="Bacteria"/>
</dbReference>
<dbReference type="HOGENOM" id="CLU_151267_1_0_4"/>
<dbReference type="PRO" id="PR:Q7VTB0"/>
<dbReference type="Proteomes" id="UP000002676">
    <property type="component" value="Chromosome"/>
</dbReference>
<dbReference type="GO" id="GO:0005829">
    <property type="term" value="C:cytosol"/>
    <property type="evidence" value="ECO:0007669"/>
    <property type="project" value="TreeGrafter"/>
</dbReference>
<dbReference type="GO" id="GO:0043022">
    <property type="term" value="F:ribosome binding"/>
    <property type="evidence" value="ECO:0007669"/>
    <property type="project" value="UniProtKB-UniRule"/>
</dbReference>
<dbReference type="GO" id="GO:0019843">
    <property type="term" value="F:rRNA binding"/>
    <property type="evidence" value="ECO:0007669"/>
    <property type="project" value="UniProtKB-UniRule"/>
</dbReference>
<dbReference type="GO" id="GO:0003743">
    <property type="term" value="F:translation initiation factor activity"/>
    <property type="evidence" value="ECO:0007669"/>
    <property type="project" value="UniProtKB-UniRule"/>
</dbReference>
<dbReference type="CDD" id="cd04451">
    <property type="entry name" value="S1_IF1"/>
    <property type="match status" value="1"/>
</dbReference>
<dbReference type="FunFam" id="2.40.50.140:FF:000002">
    <property type="entry name" value="Translation initiation factor IF-1"/>
    <property type="match status" value="1"/>
</dbReference>
<dbReference type="Gene3D" id="2.40.50.140">
    <property type="entry name" value="Nucleic acid-binding proteins"/>
    <property type="match status" value="1"/>
</dbReference>
<dbReference type="HAMAP" id="MF_00075">
    <property type="entry name" value="IF_1"/>
    <property type="match status" value="1"/>
</dbReference>
<dbReference type="InterPro" id="IPR012340">
    <property type="entry name" value="NA-bd_OB-fold"/>
</dbReference>
<dbReference type="InterPro" id="IPR006196">
    <property type="entry name" value="RNA-binding_domain_S1_IF1"/>
</dbReference>
<dbReference type="InterPro" id="IPR004368">
    <property type="entry name" value="TIF_IF1"/>
</dbReference>
<dbReference type="NCBIfam" id="TIGR00008">
    <property type="entry name" value="infA"/>
    <property type="match status" value="1"/>
</dbReference>
<dbReference type="PANTHER" id="PTHR33370">
    <property type="entry name" value="TRANSLATION INITIATION FACTOR IF-1, CHLOROPLASTIC"/>
    <property type="match status" value="1"/>
</dbReference>
<dbReference type="PANTHER" id="PTHR33370:SF1">
    <property type="entry name" value="TRANSLATION INITIATION FACTOR IF-1, CHLOROPLASTIC"/>
    <property type="match status" value="1"/>
</dbReference>
<dbReference type="Pfam" id="PF01176">
    <property type="entry name" value="eIF-1a"/>
    <property type="match status" value="1"/>
</dbReference>
<dbReference type="SUPFAM" id="SSF50249">
    <property type="entry name" value="Nucleic acid-binding proteins"/>
    <property type="match status" value="1"/>
</dbReference>
<dbReference type="PROSITE" id="PS50832">
    <property type="entry name" value="S1_IF1_TYPE"/>
    <property type="match status" value="1"/>
</dbReference>
<feature type="chain" id="PRO_0000095750" description="Translation initiation factor IF-1 2">
    <location>
        <begin position="1"/>
        <end position="72"/>
    </location>
</feature>
<feature type="domain" description="S1-like" evidence="1">
    <location>
        <begin position="1"/>
        <end position="72"/>
    </location>
</feature>
<accession>Q7VTB0</accession>
<proteinExistence type="inferred from homology"/>
<evidence type="ECO:0000255" key="1">
    <source>
        <dbReference type="HAMAP-Rule" id="MF_00075"/>
    </source>
</evidence>